<comment type="function">
    <text>LIF has the capacity to induce terminal differentiation in leukemic cells. Its activities include the induction of hematopoietic differentiation in normal and myeloid leukemia cells, the induction of neuronal cell differentiation, and the stimulation of acute-phase protein synthesis in hepatocytes.</text>
</comment>
<comment type="subcellular location">
    <subcellularLocation>
        <location>Secreted</location>
    </subcellularLocation>
</comment>
<comment type="similarity">
    <text evidence="3">Belongs to the LIF/OSM family.</text>
</comment>
<name>LIF_RAT</name>
<reference key="1">
    <citation type="journal article" date="1989" name="Science">
        <title>The cholinergic neuronal differentiation factor from heart cells is identical to leukemia inhibitory factor.</title>
        <authorList>
            <person name="Yamamori T."/>
            <person name="Fukada K."/>
            <person name="Aebersold R."/>
            <person name="Korsching S."/>
            <person name="Fann M.-J."/>
            <person name="Patterson P.H."/>
        </authorList>
    </citation>
    <scope>NUCLEOTIDE SEQUENCE [MRNA]</scope>
    <source>
        <tissue>Heart</tissue>
    </source>
</reference>
<gene>
    <name type="primary">Lif</name>
</gene>
<dbReference type="EMBL" id="M32748">
    <property type="protein sequence ID" value="AAA41530.1"/>
    <property type="molecule type" value="mRNA"/>
</dbReference>
<dbReference type="PIR" id="A40078">
    <property type="entry name" value="A40078"/>
</dbReference>
<dbReference type="SMR" id="P17777"/>
<dbReference type="FunCoup" id="P17777">
    <property type="interactions" value="97"/>
</dbReference>
<dbReference type="STRING" id="10116.ENSRNOP00000009313"/>
<dbReference type="GlyCosmos" id="P17777">
    <property type="glycosylation" value="7 sites, No reported glycans"/>
</dbReference>
<dbReference type="GlyGen" id="P17777">
    <property type="glycosylation" value="8 sites"/>
</dbReference>
<dbReference type="PaxDb" id="10116-ENSRNOP00000009313"/>
<dbReference type="UCSC" id="RGD:620865">
    <property type="organism name" value="rat"/>
</dbReference>
<dbReference type="AGR" id="RGD:620865"/>
<dbReference type="RGD" id="620865">
    <property type="gene designation" value="Lif"/>
</dbReference>
<dbReference type="eggNOG" id="ENOG502S3JD">
    <property type="taxonomic scope" value="Eukaryota"/>
</dbReference>
<dbReference type="InParanoid" id="P17777"/>
<dbReference type="PhylomeDB" id="P17777"/>
<dbReference type="Reactome" id="R-RNO-6788467">
    <property type="pathway name" value="IL-6-type cytokine receptor ligand interactions"/>
</dbReference>
<dbReference type="PRO" id="PR:P17777"/>
<dbReference type="Proteomes" id="UP000002494">
    <property type="component" value="Unplaced"/>
</dbReference>
<dbReference type="GO" id="GO:0005615">
    <property type="term" value="C:extracellular space"/>
    <property type="evidence" value="ECO:0000314"/>
    <property type="project" value="RGD"/>
</dbReference>
<dbReference type="GO" id="GO:0005125">
    <property type="term" value="F:cytokine activity"/>
    <property type="evidence" value="ECO:0000266"/>
    <property type="project" value="RGD"/>
</dbReference>
<dbReference type="GO" id="GO:0008083">
    <property type="term" value="F:growth factor activity"/>
    <property type="evidence" value="ECO:0000266"/>
    <property type="project" value="RGD"/>
</dbReference>
<dbReference type="GO" id="GO:0005146">
    <property type="term" value="F:leukemia inhibitory factor receptor binding"/>
    <property type="evidence" value="ECO:0000315"/>
    <property type="project" value="RGD"/>
</dbReference>
<dbReference type="GO" id="GO:0005102">
    <property type="term" value="F:signaling receptor binding"/>
    <property type="evidence" value="ECO:0000266"/>
    <property type="project" value="RGD"/>
</dbReference>
<dbReference type="GO" id="GO:0031100">
    <property type="term" value="P:animal organ regeneration"/>
    <property type="evidence" value="ECO:0000315"/>
    <property type="project" value="RGD"/>
</dbReference>
<dbReference type="GO" id="GO:0048708">
    <property type="term" value="P:astrocyte differentiation"/>
    <property type="evidence" value="ECO:0000315"/>
    <property type="project" value="RGD"/>
</dbReference>
<dbReference type="GO" id="GO:0001974">
    <property type="term" value="P:blood vessel remodeling"/>
    <property type="evidence" value="ECO:0000266"/>
    <property type="project" value="RGD"/>
</dbReference>
<dbReference type="GO" id="GO:0000902">
    <property type="term" value="P:cell morphogenesis"/>
    <property type="evidence" value="ECO:0000266"/>
    <property type="project" value="RGD"/>
</dbReference>
<dbReference type="GO" id="GO:0008283">
    <property type="term" value="P:cell population proliferation"/>
    <property type="evidence" value="ECO:0000266"/>
    <property type="project" value="RGD"/>
</dbReference>
<dbReference type="GO" id="GO:0097696">
    <property type="term" value="P:cell surface receptor signaling pathway via STAT"/>
    <property type="evidence" value="ECO:0000266"/>
    <property type="project" value="RGD"/>
</dbReference>
<dbReference type="GO" id="GO:0046697">
    <property type="term" value="P:decidualization"/>
    <property type="evidence" value="ECO:0000266"/>
    <property type="project" value="RGD"/>
</dbReference>
<dbReference type="GO" id="GO:0007566">
    <property type="term" value="P:embryo implantation"/>
    <property type="evidence" value="ECO:0000266"/>
    <property type="project" value="RGD"/>
</dbReference>
<dbReference type="GO" id="GO:0048144">
    <property type="term" value="P:fibroblast proliferation"/>
    <property type="evidence" value="ECO:0000266"/>
    <property type="project" value="RGD"/>
</dbReference>
<dbReference type="GO" id="GO:0010467">
    <property type="term" value="P:gene expression"/>
    <property type="evidence" value="ECO:0000266"/>
    <property type="project" value="RGD"/>
</dbReference>
<dbReference type="GO" id="GO:0006955">
    <property type="term" value="P:immune response"/>
    <property type="evidence" value="ECO:0007669"/>
    <property type="project" value="InterPro"/>
</dbReference>
<dbReference type="GO" id="GO:0048861">
    <property type="term" value="P:leukemia inhibitory factor signaling pathway"/>
    <property type="evidence" value="ECO:0000266"/>
    <property type="project" value="RGD"/>
</dbReference>
<dbReference type="GO" id="GO:0048286">
    <property type="term" value="P:lung alveolus development"/>
    <property type="evidence" value="ECO:0000266"/>
    <property type="project" value="RGD"/>
</dbReference>
<dbReference type="GO" id="GO:0030324">
    <property type="term" value="P:lung development"/>
    <property type="evidence" value="ECO:0000266"/>
    <property type="project" value="RGD"/>
</dbReference>
<dbReference type="GO" id="GO:0060463">
    <property type="term" value="P:lung lobe morphogenesis"/>
    <property type="evidence" value="ECO:0000266"/>
    <property type="project" value="RGD"/>
</dbReference>
<dbReference type="GO" id="GO:0060426">
    <property type="term" value="P:lung vasculature development"/>
    <property type="evidence" value="ECO:0000266"/>
    <property type="project" value="RGD"/>
</dbReference>
<dbReference type="GO" id="GO:0060135">
    <property type="term" value="P:maternal process involved in female pregnancy"/>
    <property type="evidence" value="ECO:0000266"/>
    <property type="project" value="RGD"/>
</dbReference>
<dbReference type="GO" id="GO:0140013">
    <property type="term" value="P:meiotic nuclear division"/>
    <property type="evidence" value="ECO:0000266"/>
    <property type="project" value="RGD"/>
</dbReference>
<dbReference type="GO" id="GO:0048644">
    <property type="term" value="P:muscle organ morphogenesis"/>
    <property type="evidence" value="ECO:0000266"/>
    <property type="project" value="RGD"/>
</dbReference>
<dbReference type="GO" id="GO:0016525">
    <property type="term" value="P:negative regulation of angiogenesis"/>
    <property type="evidence" value="ECO:0000314"/>
    <property type="project" value="RGD"/>
</dbReference>
<dbReference type="GO" id="GO:0008285">
    <property type="term" value="P:negative regulation of cell population proliferation"/>
    <property type="evidence" value="ECO:0000266"/>
    <property type="project" value="RGD"/>
</dbReference>
<dbReference type="GO" id="GO:0070373">
    <property type="term" value="P:negative regulation of ERK1 and ERK2 cascade"/>
    <property type="evidence" value="ECO:0000266"/>
    <property type="project" value="RGD"/>
</dbReference>
<dbReference type="GO" id="GO:0046888">
    <property type="term" value="P:negative regulation of hormone secretion"/>
    <property type="evidence" value="ECO:0000266"/>
    <property type="project" value="RGD"/>
</dbReference>
<dbReference type="GO" id="GO:0045835">
    <property type="term" value="P:negative regulation of meiotic nuclear division"/>
    <property type="evidence" value="ECO:0000266"/>
    <property type="project" value="RGD"/>
</dbReference>
<dbReference type="GO" id="GO:0048666">
    <property type="term" value="P:neuron development"/>
    <property type="evidence" value="ECO:0000266"/>
    <property type="project" value="RGD"/>
</dbReference>
<dbReference type="GO" id="GO:0048711">
    <property type="term" value="P:positive regulation of astrocyte differentiation"/>
    <property type="evidence" value="ECO:0000266"/>
    <property type="project" value="RGD"/>
</dbReference>
<dbReference type="GO" id="GO:0033630">
    <property type="term" value="P:positive regulation of cell adhesion mediated by integrin"/>
    <property type="evidence" value="ECO:0000266"/>
    <property type="project" value="RGD"/>
</dbReference>
<dbReference type="GO" id="GO:0008284">
    <property type="term" value="P:positive regulation of cell population proliferation"/>
    <property type="evidence" value="ECO:0000266"/>
    <property type="project" value="RGD"/>
</dbReference>
<dbReference type="GO" id="GO:0051461">
    <property type="term" value="P:positive regulation of corticotropin secretion"/>
    <property type="evidence" value="ECO:0000314"/>
    <property type="project" value="RGD"/>
</dbReference>
<dbReference type="GO" id="GO:0048146">
    <property type="term" value="P:positive regulation of fibroblast proliferation"/>
    <property type="evidence" value="ECO:0000266"/>
    <property type="project" value="RGD"/>
</dbReference>
<dbReference type="GO" id="GO:0010628">
    <property type="term" value="P:positive regulation of gene expression"/>
    <property type="evidence" value="ECO:0000266"/>
    <property type="project" value="RGD"/>
</dbReference>
<dbReference type="GO" id="GO:0045651">
    <property type="term" value="P:positive regulation of macrophage differentiation"/>
    <property type="evidence" value="ECO:0000266"/>
    <property type="project" value="RGD"/>
</dbReference>
<dbReference type="GO" id="GO:0043410">
    <property type="term" value="P:positive regulation of MAPK cascade"/>
    <property type="evidence" value="ECO:0000266"/>
    <property type="project" value="RGD"/>
</dbReference>
<dbReference type="GO" id="GO:0072108">
    <property type="term" value="P:positive regulation of mesenchymal to epithelial transition involved in metanephros morphogenesis"/>
    <property type="evidence" value="ECO:0000266"/>
    <property type="project" value="RGD"/>
</dbReference>
<dbReference type="GO" id="GO:0010976">
    <property type="term" value="P:positive regulation of neuron projection development"/>
    <property type="evidence" value="ECO:0000314"/>
    <property type="project" value="RGD"/>
</dbReference>
<dbReference type="GO" id="GO:1904894">
    <property type="term" value="P:positive regulation of receptor signaling pathway via STAT"/>
    <property type="evidence" value="ECO:0000266"/>
    <property type="project" value="RGD"/>
</dbReference>
<dbReference type="GO" id="GO:0045944">
    <property type="term" value="P:positive regulation of transcription by RNA polymerase II"/>
    <property type="evidence" value="ECO:0000266"/>
    <property type="project" value="RGD"/>
</dbReference>
<dbReference type="GO" id="GO:0045595">
    <property type="term" value="P:regulation of cell differentiation"/>
    <property type="evidence" value="ECO:0000266"/>
    <property type="project" value="RGD"/>
</dbReference>
<dbReference type="GO" id="GO:0072307">
    <property type="term" value="P:regulation of metanephric nephron tubule epithelial cell differentiation"/>
    <property type="evidence" value="ECO:0000266"/>
    <property type="project" value="RGD"/>
</dbReference>
<dbReference type="GO" id="GO:0001666">
    <property type="term" value="P:response to hypoxia"/>
    <property type="evidence" value="ECO:0000266"/>
    <property type="project" value="RGD"/>
</dbReference>
<dbReference type="GO" id="GO:0060041">
    <property type="term" value="P:retina development in camera-type eye"/>
    <property type="evidence" value="ECO:0000314"/>
    <property type="project" value="RGD"/>
</dbReference>
<dbReference type="GO" id="GO:0035019">
    <property type="term" value="P:somatic stem cell population maintenance"/>
    <property type="evidence" value="ECO:0000266"/>
    <property type="project" value="RGD"/>
</dbReference>
<dbReference type="GO" id="GO:0060708">
    <property type="term" value="P:spongiotrophoblast differentiation"/>
    <property type="evidence" value="ECO:0000266"/>
    <property type="project" value="RGD"/>
</dbReference>
<dbReference type="GO" id="GO:0048863">
    <property type="term" value="P:stem cell differentiation"/>
    <property type="evidence" value="ECO:0000266"/>
    <property type="project" value="RGD"/>
</dbReference>
<dbReference type="GO" id="GO:0060290">
    <property type="term" value="P:transdifferentiation"/>
    <property type="evidence" value="ECO:0000315"/>
    <property type="project" value="RGD"/>
</dbReference>
<dbReference type="GO" id="GO:0060707">
    <property type="term" value="P:trophoblast giant cell differentiation"/>
    <property type="evidence" value="ECO:0000266"/>
    <property type="project" value="RGD"/>
</dbReference>
<dbReference type="FunFam" id="1.20.1250.10:FF:000018">
    <property type="entry name" value="leukemia inhibitory factor"/>
    <property type="match status" value="1"/>
</dbReference>
<dbReference type="Gene3D" id="1.20.1250.10">
    <property type="match status" value="1"/>
</dbReference>
<dbReference type="InterPro" id="IPR009079">
    <property type="entry name" value="4_helix_cytokine-like_core"/>
</dbReference>
<dbReference type="InterPro" id="IPR003624">
    <property type="entry name" value="Leukemia_IF"/>
</dbReference>
<dbReference type="InterPro" id="IPR001581">
    <property type="entry name" value="Leukemia_IF/oncostatin"/>
</dbReference>
<dbReference type="InterPro" id="IPR019827">
    <property type="entry name" value="Leukemia_IF/oncostatin_CS"/>
</dbReference>
<dbReference type="PANTHER" id="PTHR10633">
    <property type="entry name" value="LEUKEMIA INHIBITORY FACTOR"/>
    <property type="match status" value="1"/>
</dbReference>
<dbReference type="PANTHER" id="PTHR10633:SF0">
    <property type="entry name" value="LEUKEMIA INHIBITORY FACTOR"/>
    <property type="match status" value="1"/>
</dbReference>
<dbReference type="Pfam" id="PF01291">
    <property type="entry name" value="LIF_OSM"/>
    <property type="match status" value="1"/>
</dbReference>
<dbReference type="PRINTS" id="PR01883">
    <property type="entry name" value="LEUKAEMIAIF"/>
</dbReference>
<dbReference type="SMART" id="SM00080">
    <property type="entry name" value="LIF_OSM"/>
    <property type="match status" value="1"/>
</dbReference>
<dbReference type="SUPFAM" id="SSF47266">
    <property type="entry name" value="4-helical cytokines"/>
    <property type="match status" value="1"/>
</dbReference>
<dbReference type="PROSITE" id="PS00590">
    <property type="entry name" value="LIF_OSM"/>
    <property type="match status" value="1"/>
</dbReference>
<accession>P17777</accession>
<protein>
    <recommendedName>
        <fullName>Leukemia inhibitory factor</fullName>
        <shortName>LIF</shortName>
    </recommendedName>
    <alternativeName>
        <fullName>Cholinergic neuronal differentiation factor</fullName>
    </alternativeName>
</protein>
<evidence type="ECO:0000250" key="1"/>
<evidence type="ECO:0000255" key="2"/>
<evidence type="ECO:0000305" key="3"/>
<proteinExistence type="evidence at transcript level"/>
<organism>
    <name type="scientific">Rattus norvegicus</name>
    <name type="common">Rat</name>
    <dbReference type="NCBI Taxonomy" id="10116"/>
    <lineage>
        <taxon>Eukaryota</taxon>
        <taxon>Metazoa</taxon>
        <taxon>Chordata</taxon>
        <taxon>Craniata</taxon>
        <taxon>Vertebrata</taxon>
        <taxon>Euteleostomi</taxon>
        <taxon>Mammalia</taxon>
        <taxon>Eutheria</taxon>
        <taxon>Euarchontoglires</taxon>
        <taxon>Glires</taxon>
        <taxon>Rodentia</taxon>
        <taxon>Myomorpha</taxon>
        <taxon>Muroidea</taxon>
        <taxon>Muridae</taxon>
        <taxon>Murinae</taxon>
        <taxon>Rattus</taxon>
    </lineage>
</organism>
<keyword id="KW-0202">Cytokine</keyword>
<keyword id="KW-1015">Disulfide bond</keyword>
<keyword id="KW-0325">Glycoprotein</keyword>
<keyword id="KW-0339">Growth factor</keyword>
<keyword id="KW-1185">Reference proteome</keyword>
<keyword id="KW-0964">Secreted</keyword>
<keyword id="KW-0732">Signal</keyword>
<sequence>MKVLAAGIVPLLLILHWKHGAGSPLPITPVNATCAIRHPCHGNLMNQIKSQLAQLNGSANALFISYYTAQGEPFPNNVDKLCAPNMTDFPPFHANGTEKTKLVELYRMVTYLGASLTNITWDQKNLNPTAVSLQIKLNATTDVMRGLLSSVLCRLCNKYHVGHVDVPCVPDNSSKEAFQRKKLGCQLLGTYKQVISVLAQAF</sequence>
<feature type="signal peptide">
    <location>
        <begin position="1"/>
        <end position="22"/>
    </location>
</feature>
<feature type="chain" id="PRO_0000017718" description="Leukemia inhibitory factor">
    <location>
        <begin position="23"/>
        <end position="202"/>
    </location>
</feature>
<feature type="glycosylation site" description="N-linked (GlcNAc...) asparagine" evidence="2">
    <location>
        <position position="31"/>
    </location>
</feature>
<feature type="glycosylation site" description="N-linked (GlcNAc...) asparagine" evidence="2">
    <location>
        <position position="56"/>
    </location>
</feature>
<feature type="glycosylation site" description="N-linked (GlcNAc...) asparagine" evidence="2">
    <location>
        <position position="85"/>
    </location>
</feature>
<feature type="glycosylation site" description="N-linked (GlcNAc...) asparagine" evidence="2">
    <location>
        <position position="95"/>
    </location>
</feature>
<feature type="glycosylation site" description="N-linked (GlcNAc...) asparagine" evidence="2">
    <location>
        <position position="118"/>
    </location>
</feature>
<feature type="glycosylation site" description="N-linked (GlcNAc...) asparagine" evidence="2">
    <location>
        <position position="138"/>
    </location>
</feature>
<feature type="glycosylation site" description="N-linked (GlcNAc...) asparagine" evidence="2">
    <location>
        <position position="172"/>
    </location>
</feature>
<feature type="disulfide bond" evidence="1">
    <location>
        <begin position="34"/>
        <end position="156"/>
    </location>
</feature>
<feature type="disulfide bond" evidence="1">
    <location>
        <begin position="40"/>
        <end position="153"/>
    </location>
</feature>
<feature type="disulfide bond" evidence="1">
    <location>
        <begin position="82"/>
        <end position="185"/>
    </location>
</feature>